<name>CMI2B_XENTR</name>
<dbReference type="EMBL" id="BC153746">
    <property type="protein sequence ID" value="AAI53747.1"/>
    <property type="molecule type" value="mRNA"/>
</dbReference>
<dbReference type="RefSeq" id="NP_001106452.1">
    <property type="nucleotide sequence ID" value="NM_001112981.1"/>
</dbReference>
<dbReference type="FunCoup" id="A8E5W8">
    <property type="interactions" value="17"/>
</dbReference>
<dbReference type="PaxDb" id="8364-ENSXETP00000059403"/>
<dbReference type="DNASU" id="100127629"/>
<dbReference type="GeneID" id="100127629"/>
<dbReference type="KEGG" id="xtr:100127629"/>
<dbReference type="AGR" id="Xenbase:XB-GENE-6456701"/>
<dbReference type="CTD" id="730112"/>
<dbReference type="Xenbase" id="XB-GENE-6456701">
    <property type="gene designation" value="cimip2b"/>
</dbReference>
<dbReference type="HOGENOM" id="CLU_2283983_0_0_1"/>
<dbReference type="InParanoid" id="A8E5W8"/>
<dbReference type="OMA" id="CCGQDLT"/>
<dbReference type="OrthoDB" id="2019884at2759"/>
<dbReference type="Proteomes" id="UP000008143">
    <property type="component" value="Chromosome 1"/>
</dbReference>
<dbReference type="GO" id="GO:0005879">
    <property type="term" value="C:axonemal microtubule"/>
    <property type="evidence" value="ECO:0000250"/>
    <property type="project" value="UniProtKB"/>
</dbReference>
<dbReference type="InterPro" id="IPR018902">
    <property type="entry name" value="CMI2A-C-like_dom"/>
</dbReference>
<dbReference type="PANTHER" id="PTHR22146">
    <property type="entry name" value="CAT EYE SYNDROME CRITICAL REGION PROTEIN 6"/>
    <property type="match status" value="1"/>
</dbReference>
<dbReference type="PANTHER" id="PTHR22146:SF8">
    <property type="entry name" value="PROTEIN FAM166B"/>
    <property type="match status" value="1"/>
</dbReference>
<dbReference type="Pfam" id="PF10629">
    <property type="entry name" value="CMI2B-like"/>
    <property type="match status" value="2"/>
</dbReference>
<protein>
    <recommendedName>
        <fullName>Ciliary microtubule inner protein 2B</fullName>
    </recommendedName>
</protein>
<reference key="1">
    <citation type="submission" date="2007-09" db="EMBL/GenBank/DDBJ databases">
        <authorList>
            <consortium name="NIH - Xenopus Gene Collection (XGC) project"/>
        </authorList>
    </citation>
    <scope>NUCLEOTIDE SEQUENCE [LARGE SCALE MRNA]</scope>
    <source>
        <tissue>Thymus</tissue>
    </source>
</reference>
<keyword id="KW-0966">Cell projection</keyword>
<keyword id="KW-0963">Cytoplasm</keyword>
<keyword id="KW-0206">Cytoskeleton</keyword>
<keyword id="KW-1185">Reference proteome</keyword>
<accession>A8E5W8</accession>
<evidence type="ECO:0000250" key="1">
    <source>
        <dbReference type="UniProtKB" id="A8MTA8"/>
    </source>
</evidence>
<evidence type="ECO:0000256" key="2">
    <source>
        <dbReference type="SAM" id="MobiDB-lite"/>
    </source>
</evidence>
<evidence type="ECO:0000305" key="3"/>
<comment type="function">
    <text evidence="1">Microtubule inner protein (MIP) part of the dynein-decorated doublet microtubules (DMTs) in cilia axoneme, which is required for motile cilia beating.</text>
</comment>
<comment type="subcellular location">
    <subcellularLocation>
        <location evidence="1">Cytoplasm</location>
        <location evidence="1">Cytoskeleton</location>
        <location evidence="1">Cilium axoneme</location>
    </subcellularLocation>
</comment>
<comment type="tissue specificity">
    <text evidence="1">Expressed in airway epithelial cells.</text>
</comment>
<comment type="similarity">
    <text evidence="3">Belongs to the CIMIP2 family.</text>
</comment>
<sequence length="306" mass="34477">MAGTFPPKISPTLMTPDPHFIPGYSGFCPQYRYSLGKTYGQLTSQLLTNPDIRRSELLVLQSNPFPPPRDHSFDGGSQELGGRRQHPGDPNLTISMIPGYTGFIPRSQKFFAKTYAETSRDALSDFHSERRGQEAQRQELLLMSKLQEGRLPRTEQEKQLLASRHRTPLPALAKEPAPFMALRGFQPQGSPYYMEEENPNKCFISGYTGYVPRSRFLIGSGYPITTNRAMVEFAHMNQKKGVRFSEGYKEGGSPHTEPGQIYLEELGLLPRYTGYVPGYKFQFGNTFGRLTQNALGHSTLQKQTVN</sequence>
<organism>
    <name type="scientific">Xenopus tropicalis</name>
    <name type="common">Western clawed frog</name>
    <name type="synonym">Silurana tropicalis</name>
    <dbReference type="NCBI Taxonomy" id="8364"/>
    <lineage>
        <taxon>Eukaryota</taxon>
        <taxon>Metazoa</taxon>
        <taxon>Chordata</taxon>
        <taxon>Craniata</taxon>
        <taxon>Vertebrata</taxon>
        <taxon>Euteleostomi</taxon>
        <taxon>Amphibia</taxon>
        <taxon>Batrachia</taxon>
        <taxon>Anura</taxon>
        <taxon>Pipoidea</taxon>
        <taxon>Pipidae</taxon>
        <taxon>Xenopodinae</taxon>
        <taxon>Xenopus</taxon>
        <taxon>Silurana</taxon>
    </lineage>
</organism>
<gene>
    <name type="primary">cimip2b</name>
    <name type="synonym">fam166b</name>
</gene>
<proteinExistence type="evidence at transcript level"/>
<feature type="chain" id="PRO_0000342387" description="Ciliary microtubule inner protein 2B">
    <location>
        <begin position="1"/>
        <end position="306"/>
    </location>
</feature>
<feature type="region of interest" description="Disordered" evidence="2">
    <location>
        <begin position="61"/>
        <end position="92"/>
    </location>
</feature>